<keyword id="KW-0066">ATP synthesis</keyword>
<keyword id="KW-0997">Cell inner membrane</keyword>
<keyword id="KW-1003">Cell membrane</keyword>
<keyword id="KW-0138">CF(0)</keyword>
<keyword id="KW-0375">Hydrogen ion transport</keyword>
<keyword id="KW-0406">Ion transport</keyword>
<keyword id="KW-0472">Membrane</keyword>
<keyword id="KW-1185">Reference proteome</keyword>
<keyword id="KW-0812">Transmembrane</keyword>
<keyword id="KW-1133">Transmembrane helix</keyword>
<keyword id="KW-0813">Transport</keyword>
<comment type="function">
    <text evidence="1">Key component of the proton channel; it plays a direct role in the translocation of protons across the membrane.</text>
</comment>
<comment type="subunit">
    <text evidence="1">F-type ATPases have 2 components, CF(1) - the catalytic core - and CF(0) - the membrane proton channel. CF(1) has five subunits: alpha(3), beta(3), gamma(1), delta(1), epsilon(1). CF(0) has three main subunits: a(1), b(2) and c(9-12). The alpha and beta chains form an alternating ring which encloses part of the gamma chain. CF(1) is attached to CF(0) by a central stalk formed by the gamma and epsilon chains, while a peripheral stalk is formed by the delta and b chains.</text>
</comment>
<comment type="subcellular location">
    <subcellularLocation>
        <location evidence="1">Cell inner membrane</location>
        <topology evidence="1">Multi-pass membrane protein</topology>
    </subcellularLocation>
</comment>
<comment type="similarity">
    <text evidence="1">Belongs to the ATPase A chain family.</text>
</comment>
<evidence type="ECO:0000255" key="1">
    <source>
        <dbReference type="HAMAP-Rule" id="MF_01393"/>
    </source>
</evidence>
<sequence>MATTGDDTLTVTASDYIQHHLTNAKMCSADGGIAFNYACQDAGFWTWHIDSLLFSVGLGVLFLWLFYKVGQKATIGVPGKLQCFVEMCVEGVDKIVKDSFHGKNAVIAPLGLTIFVWVFLMNLMDLIPVDFVPEAAKRFLGVPYLKIVPTTDLNVTLGLALSVFALIVFYSIKVKGIGGFTKELTMQPFNHWALIPINFVLETVTLVAKPISLSLRLFGNLYAGELIFILIALMPWWAQFALSVPWAIFHILVIVLQAFIFMMLTIVYLSMAHEDH</sequence>
<accession>A8HAG9</accession>
<feature type="chain" id="PRO_0000362456" description="ATP synthase subunit a">
    <location>
        <begin position="1"/>
        <end position="276"/>
    </location>
</feature>
<feature type="transmembrane region" description="Helical" evidence="1">
    <location>
        <begin position="47"/>
        <end position="67"/>
    </location>
</feature>
<feature type="transmembrane region" description="Helical" evidence="1">
    <location>
        <begin position="107"/>
        <end position="127"/>
    </location>
</feature>
<feature type="transmembrane region" description="Helical" evidence="1">
    <location>
        <begin position="152"/>
        <end position="172"/>
    </location>
</feature>
<feature type="transmembrane region" description="Helical" evidence="1">
    <location>
        <begin position="188"/>
        <end position="208"/>
    </location>
</feature>
<feature type="transmembrane region" description="Helical" evidence="1">
    <location>
        <begin position="226"/>
        <end position="246"/>
    </location>
</feature>
<feature type="transmembrane region" description="Helical" evidence="1">
    <location>
        <begin position="247"/>
        <end position="267"/>
    </location>
</feature>
<organism>
    <name type="scientific">Shewanella pealeana (strain ATCC 700345 / ANG-SQ1)</name>
    <dbReference type="NCBI Taxonomy" id="398579"/>
    <lineage>
        <taxon>Bacteria</taxon>
        <taxon>Pseudomonadati</taxon>
        <taxon>Pseudomonadota</taxon>
        <taxon>Gammaproteobacteria</taxon>
        <taxon>Alteromonadales</taxon>
        <taxon>Shewanellaceae</taxon>
        <taxon>Shewanella</taxon>
    </lineage>
</organism>
<gene>
    <name evidence="1" type="primary">atpB</name>
    <name type="ordered locus">Spea_4246</name>
</gene>
<name>ATP6_SHEPA</name>
<reference key="1">
    <citation type="submission" date="2007-10" db="EMBL/GenBank/DDBJ databases">
        <title>Complete sequence of Shewanella pealeana ATCC 700345.</title>
        <authorList>
            <consortium name="US DOE Joint Genome Institute"/>
            <person name="Copeland A."/>
            <person name="Lucas S."/>
            <person name="Lapidus A."/>
            <person name="Barry K."/>
            <person name="Glavina del Rio T."/>
            <person name="Dalin E."/>
            <person name="Tice H."/>
            <person name="Pitluck S."/>
            <person name="Chertkov O."/>
            <person name="Brettin T."/>
            <person name="Bruce D."/>
            <person name="Detter J.C."/>
            <person name="Han C."/>
            <person name="Schmutz J."/>
            <person name="Larimer F."/>
            <person name="Land M."/>
            <person name="Hauser L."/>
            <person name="Kyrpides N."/>
            <person name="Kim E."/>
            <person name="Zhao J.-S.Z."/>
            <person name="Manno D."/>
            <person name="Hawari J."/>
            <person name="Richardson P."/>
        </authorList>
    </citation>
    <scope>NUCLEOTIDE SEQUENCE [LARGE SCALE GENOMIC DNA]</scope>
    <source>
        <strain>ATCC 700345 / ANG-SQ1</strain>
    </source>
</reference>
<protein>
    <recommendedName>
        <fullName evidence="1">ATP synthase subunit a</fullName>
    </recommendedName>
    <alternativeName>
        <fullName evidence="1">ATP synthase F0 sector subunit a</fullName>
    </alternativeName>
    <alternativeName>
        <fullName evidence="1">F-ATPase subunit 6</fullName>
    </alternativeName>
</protein>
<dbReference type="EMBL" id="CP000851">
    <property type="protein sequence ID" value="ABV89556.1"/>
    <property type="molecule type" value="Genomic_DNA"/>
</dbReference>
<dbReference type="RefSeq" id="WP_012157433.1">
    <property type="nucleotide sequence ID" value="NC_009901.1"/>
</dbReference>
<dbReference type="SMR" id="A8HAG9"/>
<dbReference type="STRING" id="398579.Spea_4246"/>
<dbReference type="KEGG" id="spl:Spea_4246"/>
<dbReference type="eggNOG" id="COG0356">
    <property type="taxonomic scope" value="Bacteria"/>
</dbReference>
<dbReference type="HOGENOM" id="CLU_041018_1_0_6"/>
<dbReference type="OrthoDB" id="9789241at2"/>
<dbReference type="Proteomes" id="UP000002608">
    <property type="component" value="Chromosome"/>
</dbReference>
<dbReference type="GO" id="GO:0005886">
    <property type="term" value="C:plasma membrane"/>
    <property type="evidence" value="ECO:0007669"/>
    <property type="project" value="UniProtKB-SubCell"/>
</dbReference>
<dbReference type="GO" id="GO:0045259">
    <property type="term" value="C:proton-transporting ATP synthase complex"/>
    <property type="evidence" value="ECO:0007669"/>
    <property type="project" value="UniProtKB-KW"/>
</dbReference>
<dbReference type="GO" id="GO:0046933">
    <property type="term" value="F:proton-transporting ATP synthase activity, rotational mechanism"/>
    <property type="evidence" value="ECO:0007669"/>
    <property type="project" value="UniProtKB-UniRule"/>
</dbReference>
<dbReference type="GO" id="GO:0042777">
    <property type="term" value="P:proton motive force-driven plasma membrane ATP synthesis"/>
    <property type="evidence" value="ECO:0007669"/>
    <property type="project" value="TreeGrafter"/>
</dbReference>
<dbReference type="CDD" id="cd00310">
    <property type="entry name" value="ATP-synt_Fo_a_6"/>
    <property type="match status" value="1"/>
</dbReference>
<dbReference type="FunFam" id="1.20.120.220:FF:000002">
    <property type="entry name" value="ATP synthase subunit a"/>
    <property type="match status" value="1"/>
</dbReference>
<dbReference type="Gene3D" id="1.20.120.220">
    <property type="entry name" value="ATP synthase, F0 complex, subunit A"/>
    <property type="match status" value="1"/>
</dbReference>
<dbReference type="HAMAP" id="MF_01393">
    <property type="entry name" value="ATP_synth_a_bact"/>
    <property type="match status" value="1"/>
</dbReference>
<dbReference type="InterPro" id="IPR045082">
    <property type="entry name" value="ATP_syn_F0_a_bact/chloroplast"/>
</dbReference>
<dbReference type="InterPro" id="IPR000568">
    <property type="entry name" value="ATP_synth_F0_asu"/>
</dbReference>
<dbReference type="InterPro" id="IPR023011">
    <property type="entry name" value="ATP_synth_F0_asu_AS"/>
</dbReference>
<dbReference type="InterPro" id="IPR035908">
    <property type="entry name" value="F0_ATP_A_sf"/>
</dbReference>
<dbReference type="NCBIfam" id="TIGR01131">
    <property type="entry name" value="ATP_synt_6_or_A"/>
    <property type="match status" value="1"/>
</dbReference>
<dbReference type="NCBIfam" id="NF004477">
    <property type="entry name" value="PRK05815.1-1"/>
    <property type="match status" value="1"/>
</dbReference>
<dbReference type="PANTHER" id="PTHR42823">
    <property type="entry name" value="ATP SYNTHASE SUBUNIT A, CHLOROPLASTIC"/>
    <property type="match status" value="1"/>
</dbReference>
<dbReference type="PANTHER" id="PTHR42823:SF3">
    <property type="entry name" value="ATP SYNTHASE SUBUNIT A, CHLOROPLASTIC"/>
    <property type="match status" value="1"/>
</dbReference>
<dbReference type="Pfam" id="PF00119">
    <property type="entry name" value="ATP-synt_A"/>
    <property type="match status" value="1"/>
</dbReference>
<dbReference type="PRINTS" id="PR00123">
    <property type="entry name" value="ATPASEA"/>
</dbReference>
<dbReference type="SUPFAM" id="SSF81336">
    <property type="entry name" value="F1F0 ATP synthase subunit A"/>
    <property type="match status" value="1"/>
</dbReference>
<dbReference type="PROSITE" id="PS00449">
    <property type="entry name" value="ATPASE_A"/>
    <property type="match status" value="1"/>
</dbReference>
<proteinExistence type="inferred from homology"/>